<organism>
    <name type="scientific">Saccharopolyspora erythraea (strain ATCC 11635 / DSM 40517 / JCM 4748 / NBRC 13426 / NCIMB 8594 / NRRL 2338)</name>
    <dbReference type="NCBI Taxonomy" id="405948"/>
    <lineage>
        <taxon>Bacteria</taxon>
        <taxon>Bacillati</taxon>
        <taxon>Actinomycetota</taxon>
        <taxon>Actinomycetes</taxon>
        <taxon>Pseudonocardiales</taxon>
        <taxon>Pseudonocardiaceae</taxon>
        <taxon>Saccharopolyspora</taxon>
    </lineage>
</organism>
<gene>
    <name evidence="1" type="primary">atpA</name>
    <name type="ordered locus">SACE_6282</name>
</gene>
<evidence type="ECO:0000255" key="1">
    <source>
        <dbReference type="HAMAP-Rule" id="MF_01346"/>
    </source>
</evidence>
<evidence type="ECO:0000256" key="2">
    <source>
        <dbReference type="SAM" id="MobiDB-lite"/>
    </source>
</evidence>
<feature type="chain" id="PRO_0000302696" description="ATP synthase subunit alpha">
    <location>
        <begin position="1"/>
        <end position="548"/>
    </location>
</feature>
<feature type="region of interest" description="Disordered" evidence="2">
    <location>
        <begin position="510"/>
        <end position="548"/>
    </location>
</feature>
<feature type="compositionally biased region" description="Low complexity" evidence="2">
    <location>
        <begin position="514"/>
        <end position="531"/>
    </location>
</feature>
<feature type="binding site" evidence="1">
    <location>
        <begin position="172"/>
        <end position="179"/>
    </location>
    <ligand>
        <name>ATP</name>
        <dbReference type="ChEBI" id="CHEBI:30616"/>
    </ligand>
</feature>
<feature type="site" description="Required for activity" evidence="1">
    <location>
        <position position="373"/>
    </location>
</feature>
<keyword id="KW-0066">ATP synthesis</keyword>
<keyword id="KW-0067">ATP-binding</keyword>
<keyword id="KW-1003">Cell membrane</keyword>
<keyword id="KW-0139">CF(1)</keyword>
<keyword id="KW-0375">Hydrogen ion transport</keyword>
<keyword id="KW-0406">Ion transport</keyword>
<keyword id="KW-0472">Membrane</keyword>
<keyword id="KW-0547">Nucleotide-binding</keyword>
<keyword id="KW-1185">Reference proteome</keyword>
<keyword id="KW-1278">Translocase</keyword>
<keyword id="KW-0813">Transport</keyword>
<protein>
    <recommendedName>
        <fullName evidence="1">ATP synthase subunit alpha</fullName>
        <ecNumber evidence="1">7.1.2.2</ecNumber>
    </recommendedName>
    <alternativeName>
        <fullName evidence="1">ATP synthase F1 sector subunit alpha</fullName>
    </alternativeName>
    <alternativeName>
        <fullName evidence="1">F-ATPase subunit alpha</fullName>
    </alternativeName>
</protein>
<accession>A4FN29</accession>
<name>ATPA_SACEN</name>
<proteinExistence type="inferred from homology"/>
<dbReference type="EC" id="7.1.2.2" evidence="1"/>
<dbReference type="EMBL" id="AM420293">
    <property type="protein sequence ID" value="CAM05454.1"/>
    <property type="molecule type" value="Genomic_DNA"/>
</dbReference>
<dbReference type="RefSeq" id="WP_009948478.1">
    <property type="nucleotide sequence ID" value="NC_009142.1"/>
</dbReference>
<dbReference type="SMR" id="A4FN29"/>
<dbReference type="STRING" id="405948.SACE_6282"/>
<dbReference type="KEGG" id="sen:SACE_6282"/>
<dbReference type="eggNOG" id="COG0056">
    <property type="taxonomic scope" value="Bacteria"/>
</dbReference>
<dbReference type="HOGENOM" id="CLU_010091_2_1_11"/>
<dbReference type="OrthoDB" id="9803053at2"/>
<dbReference type="Proteomes" id="UP000006728">
    <property type="component" value="Chromosome"/>
</dbReference>
<dbReference type="GO" id="GO:0005886">
    <property type="term" value="C:plasma membrane"/>
    <property type="evidence" value="ECO:0007669"/>
    <property type="project" value="UniProtKB-SubCell"/>
</dbReference>
<dbReference type="GO" id="GO:0045259">
    <property type="term" value="C:proton-transporting ATP synthase complex"/>
    <property type="evidence" value="ECO:0007669"/>
    <property type="project" value="UniProtKB-KW"/>
</dbReference>
<dbReference type="GO" id="GO:0043531">
    <property type="term" value="F:ADP binding"/>
    <property type="evidence" value="ECO:0007669"/>
    <property type="project" value="TreeGrafter"/>
</dbReference>
<dbReference type="GO" id="GO:0005524">
    <property type="term" value="F:ATP binding"/>
    <property type="evidence" value="ECO:0007669"/>
    <property type="project" value="UniProtKB-UniRule"/>
</dbReference>
<dbReference type="GO" id="GO:0046933">
    <property type="term" value="F:proton-transporting ATP synthase activity, rotational mechanism"/>
    <property type="evidence" value="ECO:0007669"/>
    <property type="project" value="UniProtKB-UniRule"/>
</dbReference>
<dbReference type="CDD" id="cd18113">
    <property type="entry name" value="ATP-synt_F1_alpha_C"/>
    <property type="match status" value="1"/>
</dbReference>
<dbReference type="CDD" id="cd18116">
    <property type="entry name" value="ATP-synt_F1_alpha_N"/>
    <property type="match status" value="1"/>
</dbReference>
<dbReference type="CDD" id="cd01132">
    <property type="entry name" value="F1-ATPase_alpha_CD"/>
    <property type="match status" value="1"/>
</dbReference>
<dbReference type="FunFam" id="1.20.150.20:FF:000001">
    <property type="entry name" value="ATP synthase subunit alpha"/>
    <property type="match status" value="1"/>
</dbReference>
<dbReference type="FunFam" id="2.40.30.20:FF:000001">
    <property type="entry name" value="ATP synthase subunit alpha"/>
    <property type="match status" value="1"/>
</dbReference>
<dbReference type="FunFam" id="3.40.50.300:FF:000002">
    <property type="entry name" value="ATP synthase subunit alpha"/>
    <property type="match status" value="1"/>
</dbReference>
<dbReference type="Gene3D" id="2.40.30.20">
    <property type="match status" value="1"/>
</dbReference>
<dbReference type="Gene3D" id="1.20.150.20">
    <property type="entry name" value="ATP synthase alpha/beta chain, C-terminal domain"/>
    <property type="match status" value="1"/>
</dbReference>
<dbReference type="Gene3D" id="3.40.50.300">
    <property type="entry name" value="P-loop containing nucleotide triphosphate hydrolases"/>
    <property type="match status" value="1"/>
</dbReference>
<dbReference type="HAMAP" id="MF_01346">
    <property type="entry name" value="ATP_synth_alpha_bact"/>
    <property type="match status" value="1"/>
</dbReference>
<dbReference type="InterPro" id="IPR023366">
    <property type="entry name" value="ATP_synth_asu-like_sf"/>
</dbReference>
<dbReference type="InterPro" id="IPR000793">
    <property type="entry name" value="ATP_synth_asu_C"/>
</dbReference>
<dbReference type="InterPro" id="IPR038376">
    <property type="entry name" value="ATP_synth_asu_C_sf"/>
</dbReference>
<dbReference type="InterPro" id="IPR033732">
    <property type="entry name" value="ATP_synth_F1_a_nt-bd_dom"/>
</dbReference>
<dbReference type="InterPro" id="IPR005294">
    <property type="entry name" value="ATP_synth_F1_asu"/>
</dbReference>
<dbReference type="InterPro" id="IPR020003">
    <property type="entry name" value="ATPase_a/bsu_AS"/>
</dbReference>
<dbReference type="InterPro" id="IPR004100">
    <property type="entry name" value="ATPase_F1/V1/A1_a/bsu_N"/>
</dbReference>
<dbReference type="InterPro" id="IPR036121">
    <property type="entry name" value="ATPase_F1/V1/A1_a/bsu_N_sf"/>
</dbReference>
<dbReference type="InterPro" id="IPR000194">
    <property type="entry name" value="ATPase_F1/V1/A1_a/bsu_nucl-bd"/>
</dbReference>
<dbReference type="InterPro" id="IPR027417">
    <property type="entry name" value="P-loop_NTPase"/>
</dbReference>
<dbReference type="NCBIfam" id="TIGR00962">
    <property type="entry name" value="atpA"/>
    <property type="match status" value="1"/>
</dbReference>
<dbReference type="NCBIfam" id="NF009884">
    <property type="entry name" value="PRK13343.1"/>
    <property type="match status" value="1"/>
</dbReference>
<dbReference type="PANTHER" id="PTHR48082">
    <property type="entry name" value="ATP SYNTHASE SUBUNIT ALPHA, MITOCHONDRIAL"/>
    <property type="match status" value="1"/>
</dbReference>
<dbReference type="PANTHER" id="PTHR48082:SF2">
    <property type="entry name" value="ATP SYNTHASE SUBUNIT ALPHA, MITOCHONDRIAL"/>
    <property type="match status" value="1"/>
</dbReference>
<dbReference type="Pfam" id="PF00006">
    <property type="entry name" value="ATP-synt_ab"/>
    <property type="match status" value="1"/>
</dbReference>
<dbReference type="Pfam" id="PF00306">
    <property type="entry name" value="ATP-synt_ab_C"/>
    <property type="match status" value="1"/>
</dbReference>
<dbReference type="Pfam" id="PF02874">
    <property type="entry name" value="ATP-synt_ab_N"/>
    <property type="match status" value="1"/>
</dbReference>
<dbReference type="SUPFAM" id="SSF47917">
    <property type="entry name" value="C-terminal domain of alpha and beta subunits of F1 ATP synthase"/>
    <property type="match status" value="1"/>
</dbReference>
<dbReference type="SUPFAM" id="SSF50615">
    <property type="entry name" value="N-terminal domain of alpha and beta subunits of F1 ATP synthase"/>
    <property type="match status" value="1"/>
</dbReference>
<dbReference type="SUPFAM" id="SSF52540">
    <property type="entry name" value="P-loop containing nucleoside triphosphate hydrolases"/>
    <property type="match status" value="1"/>
</dbReference>
<dbReference type="PROSITE" id="PS00152">
    <property type="entry name" value="ATPASE_ALPHA_BETA"/>
    <property type="match status" value="1"/>
</dbReference>
<reference key="1">
    <citation type="journal article" date="2007" name="Nat. Biotechnol.">
        <title>Complete genome sequence of the erythromycin-producing bacterium Saccharopolyspora erythraea NRRL23338.</title>
        <authorList>
            <person name="Oliynyk M."/>
            <person name="Samborskyy M."/>
            <person name="Lester J.B."/>
            <person name="Mironenko T."/>
            <person name="Scott N."/>
            <person name="Dickens S."/>
            <person name="Haydock S.F."/>
            <person name="Leadlay P.F."/>
        </authorList>
    </citation>
    <scope>NUCLEOTIDE SEQUENCE [LARGE SCALE GENOMIC DNA]</scope>
    <source>
        <strain>ATCC 11635 / DSM 40517 / JCM 4748 / NBRC 13426 / NCIMB 8594 / NRRL 2338</strain>
    </source>
</reference>
<comment type="function">
    <text evidence="1">Produces ATP from ADP in the presence of a proton gradient across the membrane. The alpha chain is a regulatory subunit.</text>
</comment>
<comment type="catalytic activity">
    <reaction evidence="1">
        <text>ATP + H2O + 4 H(+)(in) = ADP + phosphate + 5 H(+)(out)</text>
        <dbReference type="Rhea" id="RHEA:57720"/>
        <dbReference type="ChEBI" id="CHEBI:15377"/>
        <dbReference type="ChEBI" id="CHEBI:15378"/>
        <dbReference type="ChEBI" id="CHEBI:30616"/>
        <dbReference type="ChEBI" id="CHEBI:43474"/>
        <dbReference type="ChEBI" id="CHEBI:456216"/>
        <dbReference type="EC" id="7.1.2.2"/>
    </reaction>
</comment>
<comment type="subunit">
    <text evidence="1">F-type ATPases have 2 components, CF(1) - the catalytic core - and CF(0) - the membrane proton channel. CF(1) has five subunits: alpha(3), beta(3), gamma(1), delta(1), epsilon(1). CF(0) has three main subunits: a(1), b(2) and c(9-12). The alpha and beta chains form an alternating ring which encloses part of the gamma chain. CF(1) is attached to CF(0) by a central stalk formed by the gamma and epsilon chains, while a peripheral stalk is formed by the delta and b chains.</text>
</comment>
<comment type="subcellular location">
    <subcellularLocation>
        <location evidence="1">Cell membrane</location>
        <topology evidence="1">Peripheral membrane protein</topology>
    </subcellularLocation>
</comment>
<comment type="similarity">
    <text evidence="1">Belongs to the ATPase alpha/beta chains family.</text>
</comment>
<sequence>MAELTISSDEIRSAIEKYVSSYSPEVSREEVGVVTDTGDGIAHVEGLPSVMTEELLEFPGGIYGVAMNLEAQEVGAVILGESDKIEEGQEVRRTGKVLSVPVGDDFLGRVVNPLGEPIDGLGEITAEENRALELQAATVVQRQGVSEPMQTGIKAIDSMTPIGRGQRQLLIGDRKTGKTTVAVDTIINQKGNWESGDPQKQVRCIYVAIGQKGSTIAGVKRSLEEAGALEYTTIVAAPASDSPGLKWLAPYAGSAIGQHWMYQGKHVLIVFDDLTKQAEAYRAISLLLRRPPGREAYPGDVFYLHSRLLERCAKLSDEMGAGSMTGLPIIETKANDVSAYIPTNVISITDGQCFLQSDLFNSGQRPAIDVGISVSRVGGSAQINAIRKVTGSLKIDLAQFRELEAFSAFASDLDATSKAQLDRGARLMEVLKQGQGEPLPVEEEVVSLFLGTKGHLDSVPVEDVRRFESEFLAHMRRTHDTVLKDIVETKKLSDDGAKTIADTAEEFKKQFTTSSGESAAPSEPEAEALAADEVGQETVKVNRPAPKK</sequence>